<name>PILS_PSEAE</name>
<reference key="1">
    <citation type="journal article" date="1993" name="Mol. Microbiol.">
        <title>PilS and PilR, a two-component transcriptional regulatory system controlling expression of type 4 fimbriae in Pseudomonas aeruginosa.</title>
        <authorList>
            <person name="Hobbs M."/>
            <person name="Collie E.S.R."/>
            <person name="Free P.D."/>
            <person name="Livingston S.P."/>
            <person name="Mattick J.S."/>
        </authorList>
    </citation>
    <scope>NUCLEOTIDE SEQUENCE [GENOMIC DNA]</scope>
    <scope>FUNCTION</scope>
    <source>
        <strain>ATCC 15692 / DSM 22644 / CIP 104116 / JCM 14847 / LMG 12228 / 1C / PRS 101 / PAO1</strain>
    </source>
</reference>
<reference key="2">
    <citation type="journal article" date="2000" name="Nature">
        <title>Complete genome sequence of Pseudomonas aeruginosa PAO1, an opportunistic pathogen.</title>
        <authorList>
            <person name="Stover C.K."/>
            <person name="Pham X.-Q.T."/>
            <person name="Erwin A.L."/>
            <person name="Mizoguchi S.D."/>
            <person name="Warrener P."/>
            <person name="Hickey M.J."/>
            <person name="Brinkman F.S.L."/>
            <person name="Hufnagle W.O."/>
            <person name="Kowalik D.J."/>
            <person name="Lagrou M."/>
            <person name="Garber R.L."/>
            <person name="Goltry L."/>
            <person name="Tolentino E."/>
            <person name="Westbrock-Wadman S."/>
            <person name="Yuan Y."/>
            <person name="Brody L.L."/>
            <person name="Coulter S.N."/>
            <person name="Folger K.R."/>
            <person name="Kas A."/>
            <person name="Larbig K."/>
            <person name="Lim R.M."/>
            <person name="Smith K.A."/>
            <person name="Spencer D.H."/>
            <person name="Wong G.K.-S."/>
            <person name="Wu Z."/>
            <person name="Paulsen I.T."/>
            <person name="Reizer J."/>
            <person name="Saier M.H. Jr."/>
            <person name="Hancock R.E.W."/>
            <person name="Lory S."/>
            <person name="Olson M.V."/>
        </authorList>
    </citation>
    <scope>NUCLEOTIDE SEQUENCE [LARGE SCALE GENOMIC DNA]</scope>
    <source>
        <strain>ATCC 15692 / DSM 22644 / CIP 104116 / JCM 14847 / LMG 12228 / 1C / PRS 101 / PAO1</strain>
    </source>
</reference>
<reference key="3">
    <citation type="journal article" date="1994" name="Mol. Gen. Genet.">
        <title>Identification and characterization of PilS, an essential regulator of pilin expression in Pseudomonas aeruginosa.</title>
        <authorList>
            <person name="Boyd J.M."/>
            <person name="Koga T."/>
            <person name="Lory S."/>
        </authorList>
    </citation>
    <scope>FUNCTION</scope>
    <source>
        <strain>PAK</strain>
    </source>
</reference>
<reference key="4">
    <citation type="journal article" date="1996" name="J. Bacteriol.">
        <title>Dual function of PilS during transcriptional activation of the Pseudomonas aeruginosa pilin subunit gene.</title>
        <authorList>
            <person name="Boyd J.M."/>
            <person name="Lory S."/>
        </authorList>
    </citation>
    <scope>FUNCTION</scope>
    <scope>SUBCELLULAR LOCATION</scope>
    <scope>MUTAGENESIS OF HIS-319</scope>
    <scope>CATALYTIC ACTIVITY</scope>
    <source>
        <strain>PAK</strain>
    </source>
</reference>
<reference key="5">
    <citation type="journal article" date="2000" name="Mol. Microbiol.">
        <title>Localization of the histidine kinase PilS to the poles of Pseudomonas aeruginosa and identification of a localization domain.</title>
        <authorList>
            <person name="Boyd J.M."/>
        </authorList>
    </citation>
    <scope>SUBCELLULAR LOCATION</scope>
    <scope>DOMAIN</scope>
    <source>
        <strain>PAK</strain>
    </source>
</reference>
<reference key="6">
    <citation type="journal article" date="2016" name="Proc. Natl. Acad. Sci. U.S.A.">
        <title>Type IV pilins regulate their own expression via direct intramembrane interactions with the sensor kinase PilS.</title>
        <authorList>
            <person name="Kilmury S.L."/>
            <person name="Burrows L.L."/>
        </authorList>
    </citation>
    <scope>FUNCTION</scope>
    <scope>INTERACTION WITH PILA</scope>
    <scope>SUBCELLULAR LOCATION</scope>
    <scope>MUTAGENESIS OF ARG-24 AND ASN-323</scope>
</reference>
<reference key="7">
    <citation type="journal article" date="2018" name="MBio">
        <title>The Pseudomonas aeruginosa PilSR Two-Component System Regulates Both Twitching and Swimming Motilities.</title>
        <authorList>
            <person name="Kilmury S.L.N."/>
            <person name="Burrows L.L."/>
        </authorList>
    </citation>
    <scope>FUNCTION</scope>
    <scope>DISRUPTION PHENOTYPE</scope>
</reference>
<organism>
    <name type="scientific">Pseudomonas aeruginosa (strain ATCC 15692 / DSM 22644 / CIP 104116 / JCM 14847 / LMG 12228 / 1C / PRS 101 / PAO1)</name>
    <dbReference type="NCBI Taxonomy" id="208964"/>
    <lineage>
        <taxon>Bacteria</taxon>
        <taxon>Pseudomonadati</taxon>
        <taxon>Pseudomonadota</taxon>
        <taxon>Gammaproteobacteria</taxon>
        <taxon>Pseudomonadales</taxon>
        <taxon>Pseudomonadaceae</taxon>
        <taxon>Pseudomonas</taxon>
    </lineage>
</organism>
<proteinExistence type="evidence at protein level"/>
<sequence length="530" mass="58985">MRAERLRLSEEQGQRILRLYHLYRLTIGLVLVLLISSELEDQVLKLVHPELFHVGSWCYLVFNILVALFLPPSRQLLPIFILALTDVLMLCGLFYAGGGVPSGIGSLLVVAVAIANILLRGRIGLVIAAAASLGLLYLTFFLSLSSPDATNHYVQAGGLGTLCFAAALVIQALVRRQEQTETLAEERAETVANLEELNALILQRMRTGILVVDSRQAILLANQAALGLLRQDDVQGASLGRHSPMLMHCMKQWRLNPSLRPPTLKVVPDGPTVQPSFISLNREDDQHVLIFLEDISQIAQQAQQMKLAGLGRLTAGIAHEIRNPLGAISHAAQLLQESEELDAPDRRLTQIIQDQSKRMNLVIENVLQLSRRRQAEPQQLDLKEWLQRFVDEYPGRLRNDSQLHLQLGAGDIQTRMDPHQLNQVLSNLVQNGLRYSAQAHGRGQVWLSLARDPESDLPVLEVIDDGPGVPADKLNNLFEPFFTTESKGTGLGLYLSRELCESNQARIDYRNREEGGGCFRITFAHPRKLS</sequence>
<gene>
    <name type="primary">pilS</name>
    <name type="ordered locus">PA4546</name>
</gene>
<accession>P33639</accession>
<evidence type="ECO:0000255" key="1"/>
<evidence type="ECO:0000255" key="2">
    <source>
        <dbReference type="PROSITE-ProRule" id="PRU00107"/>
    </source>
</evidence>
<evidence type="ECO:0000269" key="3">
    <source>
    </source>
</evidence>
<evidence type="ECO:0000269" key="4">
    <source>
    </source>
</evidence>
<evidence type="ECO:0000269" key="5">
    <source>
    </source>
</evidence>
<evidence type="ECO:0000269" key="6">
    <source>
    </source>
</evidence>
<evidence type="ECO:0000269" key="7">
    <source>
    </source>
</evidence>
<evidence type="ECO:0000269" key="8">
    <source>
    </source>
</evidence>
<evidence type="ECO:0000303" key="9">
    <source>
    </source>
</evidence>
<evidence type="ECO:0000305" key="10"/>
<protein>
    <recommendedName>
        <fullName evidence="9">Sensor protein kinase PilS</fullName>
        <ecNumber evidence="8">2.7.13.3</ecNumber>
    </recommendedName>
</protein>
<feature type="chain" id="PRO_0000074851" description="Sensor protein kinase PilS">
    <location>
        <begin position="1"/>
        <end position="530"/>
    </location>
</feature>
<feature type="transmembrane region" description="Helical" evidence="1">
    <location>
        <begin position="25"/>
        <end position="37"/>
    </location>
</feature>
<feature type="transmembrane region" description="Helical" evidence="1">
    <location>
        <begin position="57"/>
        <end position="70"/>
    </location>
</feature>
<feature type="transmembrane region" description="Helical" evidence="1">
    <location>
        <begin position="76"/>
        <end position="98"/>
    </location>
</feature>
<feature type="transmembrane region" description="Helical" evidence="1">
    <location>
        <begin position="101"/>
        <end position="119"/>
    </location>
</feature>
<feature type="transmembrane region" description="Helical" evidence="1">
    <location>
        <begin position="124"/>
        <end position="144"/>
    </location>
</feature>
<feature type="transmembrane region" description="Helical" evidence="1">
    <location>
        <begin position="156"/>
        <end position="174"/>
    </location>
</feature>
<feature type="topological domain" description="Cytoplasmic" evidence="1">
    <location>
        <begin position="175"/>
        <end position="530"/>
    </location>
</feature>
<feature type="domain" description="PAS">
    <location>
        <begin position="196"/>
        <end position="260"/>
    </location>
</feature>
<feature type="domain" description="Histidine kinase" evidence="2">
    <location>
        <begin position="316"/>
        <end position="527"/>
    </location>
</feature>
<feature type="modified residue" description="Phosphohistidine; by autocatalysis" evidence="2">
    <location>
        <position position="319"/>
    </location>
</feature>
<feature type="mutagenesis site" description="Complete loss of PilA autoregulation." evidence="4">
    <original>R</original>
    <variation>E</variation>
    <location>
        <position position="24"/>
    </location>
</feature>
<feature type="mutagenesis site" description="Loss of pilin gene expression." evidence="8">
    <original>H</original>
    <variation>L</variation>
    <location>
        <position position="319"/>
    </location>
</feature>
<feature type="mutagenesis site" description="Approximately threefold increase in basal pilA transcription." evidence="4">
    <original>N</original>
    <variation>A</variation>
    <location>
        <position position="323"/>
    </location>
</feature>
<keyword id="KW-0067">ATP-binding</keyword>
<keyword id="KW-0997">Cell inner membrane</keyword>
<keyword id="KW-1003">Cell membrane</keyword>
<keyword id="KW-0418">Kinase</keyword>
<keyword id="KW-0472">Membrane</keyword>
<keyword id="KW-0547">Nucleotide-binding</keyword>
<keyword id="KW-0597">Phosphoprotein</keyword>
<keyword id="KW-1185">Reference proteome</keyword>
<keyword id="KW-0808">Transferase</keyword>
<keyword id="KW-0812">Transmembrane</keyword>
<keyword id="KW-1133">Transmembrane helix</keyword>
<keyword id="KW-0902">Two-component regulatory system</keyword>
<dbReference type="EC" id="2.7.13.3" evidence="8"/>
<dbReference type="EMBL" id="Z12154">
    <property type="protein sequence ID" value="CAA78138.1"/>
    <property type="molecule type" value="Genomic_DNA"/>
</dbReference>
<dbReference type="EMBL" id="AE004091">
    <property type="protein sequence ID" value="AAG07934.1"/>
    <property type="molecule type" value="Genomic_DNA"/>
</dbReference>
<dbReference type="PIR" id="S33673">
    <property type="entry name" value="S33673"/>
</dbReference>
<dbReference type="RefSeq" id="NP_253236.1">
    <property type="nucleotide sequence ID" value="NC_002516.2"/>
</dbReference>
<dbReference type="RefSeq" id="WP_003094692.1">
    <property type="nucleotide sequence ID" value="NZ_QZGE01000004.1"/>
</dbReference>
<dbReference type="SMR" id="P33639"/>
<dbReference type="STRING" id="208964.PA4546"/>
<dbReference type="PaxDb" id="208964-PA4546"/>
<dbReference type="GeneID" id="877621"/>
<dbReference type="KEGG" id="pae:PA4546"/>
<dbReference type="PATRIC" id="fig|208964.12.peg.4758"/>
<dbReference type="PseudoCAP" id="PA4546"/>
<dbReference type="HOGENOM" id="CLU_000445_114_39_6"/>
<dbReference type="InParanoid" id="P33639"/>
<dbReference type="OrthoDB" id="9815750at2"/>
<dbReference type="PhylomeDB" id="P33639"/>
<dbReference type="BioCyc" id="PAER208964:G1FZ6-4639-MONOMER"/>
<dbReference type="BRENDA" id="2.7.13.3">
    <property type="organism ID" value="5087"/>
</dbReference>
<dbReference type="Proteomes" id="UP000002438">
    <property type="component" value="Chromosome"/>
</dbReference>
<dbReference type="GO" id="GO:0005886">
    <property type="term" value="C:plasma membrane"/>
    <property type="evidence" value="ECO:0007669"/>
    <property type="project" value="UniProtKB-SubCell"/>
</dbReference>
<dbReference type="GO" id="GO:0005524">
    <property type="term" value="F:ATP binding"/>
    <property type="evidence" value="ECO:0007669"/>
    <property type="project" value="UniProtKB-KW"/>
</dbReference>
<dbReference type="GO" id="GO:0000155">
    <property type="term" value="F:phosphorelay sensor kinase activity"/>
    <property type="evidence" value="ECO:0007669"/>
    <property type="project" value="InterPro"/>
</dbReference>
<dbReference type="GO" id="GO:0060491">
    <property type="term" value="P:regulation of cell projection assembly"/>
    <property type="evidence" value="ECO:0000315"/>
    <property type="project" value="PseudoCAP"/>
</dbReference>
<dbReference type="CDD" id="cd00082">
    <property type="entry name" value="HisKA"/>
    <property type="match status" value="1"/>
</dbReference>
<dbReference type="FunFam" id="1.10.287.130:FF:000057">
    <property type="entry name" value="Type IV pilus sensor protein PilS"/>
    <property type="match status" value="1"/>
</dbReference>
<dbReference type="Gene3D" id="1.10.287.130">
    <property type="match status" value="1"/>
</dbReference>
<dbReference type="Gene3D" id="3.30.565.10">
    <property type="entry name" value="Histidine kinase-like ATPase, C-terminal domain"/>
    <property type="match status" value="1"/>
</dbReference>
<dbReference type="Gene3D" id="3.30.450.20">
    <property type="entry name" value="PAS domain"/>
    <property type="match status" value="1"/>
</dbReference>
<dbReference type="InterPro" id="IPR036890">
    <property type="entry name" value="HATPase_C_sf"/>
</dbReference>
<dbReference type="InterPro" id="IPR005467">
    <property type="entry name" value="His_kinase_dom"/>
</dbReference>
<dbReference type="InterPro" id="IPR003661">
    <property type="entry name" value="HisK_dim/P_dom"/>
</dbReference>
<dbReference type="InterPro" id="IPR036097">
    <property type="entry name" value="HisK_dim/P_sf"/>
</dbReference>
<dbReference type="InterPro" id="IPR000014">
    <property type="entry name" value="PAS"/>
</dbReference>
<dbReference type="InterPro" id="IPR004358">
    <property type="entry name" value="Sig_transdc_His_kin-like_C"/>
</dbReference>
<dbReference type="PANTHER" id="PTHR43065">
    <property type="entry name" value="SENSOR HISTIDINE KINASE"/>
    <property type="match status" value="1"/>
</dbReference>
<dbReference type="PANTHER" id="PTHR43065:SF52">
    <property type="entry name" value="SENSOR PROTEIN KINASE PILS"/>
    <property type="match status" value="1"/>
</dbReference>
<dbReference type="Pfam" id="PF25323">
    <property type="entry name" value="6TM_PilS"/>
    <property type="match status" value="1"/>
</dbReference>
<dbReference type="Pfam" id="PF02518">
    <property type="entry name" value="HATPase_c"/>
    <property type="match status" value="1"/>
</dbReference>
<dbReference type="Pfam" id="PF00512">
    <property type="entry name" value="HisKA"/>
    <property type="match status" value="1"/>
</dbReference>
<dbReference type="PRINTS" id="PR00344">
    <property type="entry name" value="BCTRLSENSOR"/>
</dbReference>
<dbReference type="SMART" id="SM00387">
    <property type="entry name" value="HATPase_c"/>
    <property type="match status" value="1"/>
</dbReference>
<dbReference type="SMART" id="SM00388">
    <property type="entry name" value="HisKA"/>
    <property type="match status" value="1"/>
</dbReference>
<dbReference type="SMART" id="SM00091">
    <property type="entry name" value="PAS"/>
    <property type="match status" value="1"/>
</dbReference>
<dbReference type="SUPFAM" id="SSF55874">
    <property type="entry name" value="ATPase domain of HSP90 chaperone/DNA topoisomerase II/histidine kinase"/>
    <property type="match status" value="1"/>
</dbReference>
<dbReference type="SUPFAM" id="SSF47384">
    <property type="entry name" value="Homodimeric domain of signal transducing histidine kinase"/>
    <property type="match status" value="1"/>
</dbReference>
<dbReference type="PROSITE" id="PS50109">
    <property type="entry name" value="HIS_KIN"/>
    <property type="match status" value="1"/>
</dbReference>
<comment type="function">
    <text evidence="4 5 6 7 8">Member of the two-component regulatory system PilS/PilR that regulates the expression of multiple genes including the type IV pilus (T4P) major subunit PilA (PubMed:7911557, PubMed:8097014). Thereby, plays a major role in the regulation of multiple motility pathways (PubMed:30042200). Functions as a membrane-associated protein kinase that phosphorylates PilR in response to environmental signals leading to activation of specific gene promoters including the pilin gene (PubMed:27162347, PubMed:8550520).</text>
</comment>
<comment type="catalytic activity">
    <reaction evidence="8">
        <text>ATP + protein L-histidine = ADP + protein N-phospho-L-histidine.</text>
        <dbReference type="EC" id="2.7.13.3"/>
    </reaction>
</comment>
<comment type="subunit">
    <text evidence="4">Interacts with PilA.</text>
</comment>
<comment type="subcellular location">
    <subcellularLocation>
        <location evidence="4 8">Cell inner membrane</location>
        <topology evidence="10">Multi-pass membrane protein</topology>
    </subcellularLocation>
    <text evidence="3">Localizes at both poles of P.aeruginosa. Also accumulates at the septum of dividing cells, so when the daughter cells separate, PilS is already in place at both poles.</text>
</comment>
<comment type="domain">
    <text evidence="3">The linker domain is the critical region for polar localization.</text>
</comment>
<comment type="disruption phenotype">
    <text evidence="5">Deletion mutant results in changes in swimming, swarming and/or twitching motility associated with virulence in specific hosts.</text>
</comment>